<name>C1QA_HUMAN</name>
<accession>P02745</accession>
<accession>B2R4X2</accession>
<accession>Q5T963</accession>
<sequence length="245" mass="26017">MEGPRGWLVLCVLAISLASMVTEDLCRAPDGKKGEAGRPGRRGRPGLKGEQGEPGAPGIRTGIQGLKGDQGEPGPSGNPGKVGYPGPSGPLGARGIPGIKGTKGSPGNIKDQPRPAFSAIRRNPPMGGNVVIFDTVITNQEEPYQNHSGRFVCTVPGYYYFTFQVLSQWEICLSIVSSSRGQVRRSLGFCDTTNKGLFQVVSGGMVLQLQQGDQVWVEKDPKKGHIYQGSEADSVFSGFLIFPSA</sequence>
<protein>
    <recommendedName>
        <fullName evidence="30">Complement C1q subcomponent subunit A</fullName>
    </recommendedName>
</protein>
<keyword id="KW-0002">3D-structure</keyword>
<keyword id="KW-0176">Collagen</keyword>
<keyword id="KW-0180">Complement pathway</keyword>
<keyword id="KW-0903">Direct protein sequencing</keyword>
<keyword id="KW-1015">Disulfide bond</keyword>
<keyword id="KW-0325">Glycoprotein</keyword>
<keyword id="KW-0945">Host-virus interaction</keyword>
<keyword id="KW-0379">Hydroxylation</keyword>
<keyword id="KW-0391">Immunity</keyword>
<keyword id="KW-0399">Innate immunity</keyword>
<keyword id="KW-1267">Proteomics identification</keyword>
<keyword id="KW-1185">Reference proteome</keyword>
<keyword id="KW-0677">Repeat</keyword>
<keyword id="KW-0964">Secreted</keyword>
<keyword id="KW-0732">Signal</keyword>
<reference key="1">
    <citation type="journal article" date="1991" name="Biochem. J.">
        <title>Characterization and organization of the genes encoding the A-, B- and C-chains of human complement subcomponent C1q. The complete derived amino acid sequence of human C1q.</title>
        <authorList>
            <person name="Sellar G.C."/>
            <person name="Blake D.J."/>
            <person name="Reid K.B.M."/>
        </authorList>
    </citation>
    <scope>NUCLEOTIDE SEQUENCE [GENOMIC DNA]</scope>
    <source>
        <tissue>Monocyte</tissue>
    </source>
</reference>
<reference key="2">
    <citation type="submission" date="1999-03" db="EMBL/GenBank/DDBJ databases">
        <authorList>
            <person name="Wan T."/>
            <person name="Zhang W."/>
            <person name="Cao X."/>
        </authorList>
    </citation>
    <scope>NUCLEOTIDE SEQUENCE [MRNA]</scope>
</reference>
<reference key="3">
    <citation type="submission" date="2004-10" db="EMBL/GenBank/DDBJ databases">
        <authorList>
            <consortium name="SeattleSNPs variation discovery resource"/>
        </authorList>
    </citation>
    <scope>NUCLEOTIDE SEQUENCE [GENOMIC DNA]</scope>
    <scope>VARIANT LYS-23</scope>
</reference>
<reference key="4">
    <citation type="journal article" date="2004" name="Nat. Genet.">
        <title>Complete sequencing and characterization of 21,243 full-length human cDNAs.</title>
        <authorList>
            <person name="Ota T."/>
            <person name="Suzuki Y."/>
            <person name="Nishikawa T."/>
            <person name="Otsuki T."/>
            <person name="Sugiyama T."/>
            <person name="Irie R."/>
            <person name="Wakamatsu A."/>
            <person name="Hayashi K."/>
            <person name="Sato H."/>
            <person name="Nagai K."/>
            <person name="Kimura K."/>
            <person name="Makita H."/>
            <person name="Sekine M."/>
            <person name="Obayashi M."/>
            <person name="Nishi T."/>
            <person name="Shibahara T."/>
            <person name="Tanaka T."/>
            <person name="Ishii S."/>
            <person name="Yamamoto J."/>
            <person name="Saito K."/>
            <person name="Kawai Y."/>
            <person name="Isono Y."/>
            <person name="Nakamura Y."/>
            <person name="Nagahari K."/>
            <person name="Murakami K."/>
            <person name="Yasuda T."/>
            <person name="Iwayanagi T."/>
            <person name="Wagatsuma M."/>
            <person name="Shiratori A."/>
            <person name="Sudo H."/>
            <person name="Hosoiri T."/>
            <person name="Kaku Y."/>
            <person name="Kodaira H."/>
            <person name="Kondo H."/>
            <person name="Sugawara M."/>
            <person name="Takahashi M."/>
            <person name="Kanda K."/>
            <person name="Yokoi T."/>
            <person name="Furuya T."/>
            <person name="Kikkawa E."/>
            <person name="Omura Y."/>
            <person name="Abe K."/>
            <person name="Kamihara K."/>
            <person name="Katsuta N."/>
            <person name="Sato K."/>
            <person name="Tanikawa M."/>
            <person name="Yamazaki M."/>
            <person name="Ninomiya K."/>
            <person name="Ishibashi T."/>
            <person name="Yamashita H."/>
            <person name="Murakawa K."/>
            <person name="Fujimori K."/>
            <person name="Tanai H."/>
            <person name="Kimata M."/>
            <person name="Watanabe M."/>
            <person name="Hiraoka S."/>
            <person name="Chiba Y."/>
            <person name="Ishida S."/>
            <person name="Ono Y."/>
            <person name="Takiguchi S."/>
            <person name="Watanabe S."/>
            <person name="Yosida M."/>
            <person name="Hotuta T."/>
            <person name="Kusano J."/>
            <person name="Kanehori K."/>
            <person name="Takahashi-Fujii A."/>
            <person name="Hara H."/>
            <person name="Tanase T.-O."/>
            <person name="Nomura Y."/>
            <person name="Togiya S."/>
            <person name="Komai F."/>
            <person name="Hara R."/>
            <person name="Takeuchi K."/>
            <person name="Arita M."/>
            <person name="Imose N."/>
            <person name="Musashino K."/>
            <person name="Yuuki H."/>
            <person name="Oshima A."/>
            <person name="Sasaki N."/>
            <person name="Aotsuka S."/>
            <person name="Yoshikawa Y."/>
            <person name="Matsunawa H."/>
            <person name="Ichihara T."/>
            <person name="Shiohata N."/>
            <person name="Sano S."/>
            <person name="Moriya S."/>
            <person name="Momiyama H."/>
            <person name="Satoh N."/>
            <person name="Takami S."/>
            <person name="Terashima Y."/>
            <person name="Suzuki O."/>
            <person name="Nakagawa S."/>
            <person name="Senoh A."/>
            <person name="Mizoguchi H."/>
            <person name="Goto Y."/>
            <person name="Shimizu F."/>
            <person name="Wakebe H."/>
            <person name="Hishigaki H."/>
            <person name="Watanabe T."/>
            <person name="Sugiyama A."/>
            <person name="Takemoto M."/>
            <person name="Kawakami B."/>
            <person name="Yamazaki M."/>
            <person name="Watanabe K."/>
            <person name="Kumagai A."/>
            <person name="Itakura S."/>
            <person name="Fukuzumi Y."/>
            <person name="Fujimori Y."/>
            <person name="Komiyama M."/>
            <person name="Tashiro H."/>
            <person name="Tanigami A."/>
            <person name="Fujiwara T."/>
            <person name="Ono T."/>
            <person name="Yamada K."/>
            <person name="Fujii Y."/>
            <person name="Ozaki K."/>
            <person name="Hirao M."/>
            <person name="Ohmori Y."/>
            <person name="Kawabata A."/>
            <person name="Hikiji T."/>
            <person name="Kobatake N."/>
            <person name="Inagaki H."/>
            <person name="Ikema Y."/>
            <person name="Okamoto S."/>
            <person name="Okitani R."/>
            <person name="Kawakami T."/>
            <person name="Noguchi S."/>
            <person name="Itoh T."/>
            <person name="Shigeta K."/>
            <person name="Senba T."/>
            <person name="Matsumura K."/>
            <person name="Nakajima Y."/>
            <person name="Mizuno T."/>
            <person name="Morinaga M."/>
            <person name="Sasaki M."/>
            <person name="Togashi T."/>
            <person name="Oyama M."/>
            <person name="Hata H."/>
            <person name="Watanabe M."/>
            <person name="Komatsu T."/>
            <person name="Mizushima-Sugano J."/>
            <person name="Satoh T."/>
            <person name="Shirai Y."/>
            <person name="Takahashi Y."/>
            <person name="Nakagawa K."/>
            <person name="Okumura K."/>
            <person name="Nagase T."/>
            <person name="Nomura N."/>
            <person name="Kikuchi H."/>
            <person name="Masuho Y."/>
            <person name="Yamashita R."/>
            <person name="Nakai K."/>
            <person name="Yada T."/>
            <person name="Nakamura Y."/>
            <person name="Ohara O."/>
            <person name="Isogai T."/>
            <person name="Sugano S."/>
        </authorList>
    </citation>
    <scope>NUCLEOTIDE SEQUENCE [LARGE SCALE MRNA]</scope>
    <source>
        <tissue>Spleen</tissue>
    </source>
</reference>
<reference key="5">
    <citation type="journal article" date="2006" name="Nature">
        <title>The DNA sequence and biological annotation of human chromosome 1.</title>
        <authorList>
            <person name="Gregory S.G."/>
            <person name="Barlow K.F."/>
            <person name="McLay K.E."/>
            <person name="Kaul R."/>
            <person name="Swarbreck D."/>
            <person name="Dunham A."/>
            <person name="Scott C.E."/>
            <person name="Howe K.L."/>
            <person name="Woodfine K."/>
            <person name="Spencer C.C.A."/>
            <person name="Jones M.C."/>
            <person name="Gillson C."/>
            <person name="Searle S."/>
            <person name="Zhou Y."/>
            <person name="Kokocinski F."/>
            <person name="McDonald L."/>
            <person name="Evans R."/>
            <person name="Phillips K."/>
            <person name="Atkinson A."/>
            <person name="Cooper R."/>
            <person name="Jones C."/>
            <person name="Hall R.E."/>
            <person name="Andrews T.D."/>
            <person name="Lloyd C."/>
            <person name="Ainscough R."/>
            <person name="Almeida J.P."/>
            <person name="Ambrose K.D."/>
            <person name="Anderson F."/>
            <person name="Andrew R.W."/>
            <person name="Ashwell R.I.S."/>
            <person name="Aubin K."/>
            <person name="Babbage A.K."/>
            <person name="Bagguley C.L."/>
            <person name="Bailey J."/>
            <person name="Beasley H."/>
            <person name="Bethel G."/>
            <person name="Bird C.P."/>
            <person name="Bray-Allen S."/>
            <person name="Brown J.Y."/>
            <person name="Brown A.J."/>
            <person name="Buckley D."/>
            <person name="Burton J."/>
            <person name="Bye J."/>
            <person name="Carder C."/>
            <person name="Chapman J.C."/>
            <person name="Clark S.Y."/>
            <person name="Clarke G."/>
            <person name="Clee C."/>
            <person name="Cobley V."/>
            <person name="Collier R.E."/>
            <person name="Corby N."/>
            <person name="Coville G.J."/>
            <person name="Davies J."/>
            <person name="Deadman R."/>
            <person name="Dunn M."/>
            <person name="Earthrowl M."/>
            <person name="Ellington A.G."/>
            <person name="Errington H."/>
            <person name="Frankish A."/>
            <person name="Frankland J."/>
            <person name="French L."/>
            <person name="Garner P."/>
            <person name="Garnett J."/>
            <person name="Gay L."/>
            <person name="Ghori M.R.J."/>
            <person name="Gibson R."/>
            <person name="Gilby L.M."/>
            <person name="Gillett W."/>
            <person name="Glithero R.J."/>
            <person name="Grafham D.V."/>
            <person name="Griffiths C."/>
            <person name="Griffiths-Jones S."/>
            <person name="Grocock R."/>
            <person name="Hammond S."/>
            <person name="Harrison E.S.I."/>
            <person name="Hart E."/>
            <person name="Haugen E."/>
            <person name="Heath P.D."/>
            <person name="Holmes S."/>
            <person name="Holt K."/>
            <person name="Howden P.J."/>
            <person name="Hunt A.R."/>
            <person name="Hunt S.E."/>
            <person name="Hunter G."/>
            <person name="Isherwood J."/>
            <person name="James R."/>
            <person name="Johnson C."/>
            <person name="Johnson D."/>
            <person name="Joy A."/>
            <person name="Kay M."/>
            <person name="Kershaw J.K."/>
            <person name="Kibukawa M."/>
            <person name="Kimberley A.M."/>
            <person name="King A."/>
            <person name="Knights A.J."/>
            <person name="Lad H."/>
            <person name="Laird G."/>
            <person name="Lawlor S."/>
            <person name="Leongamornlert D.A."/>
            <person name="Lloyd D.M."/>
            <person name="Loveland J."/>
            <person name="Lovell J."/>
            <person name="Lush M.J."/>
            <person name="Lyne R."/>
            <person name="Martin S."/>
            <person name="Mashreghi-Mohammadi M."/>
            <person name="Matthews L."/>
            <person name="Matthews N.S.W."/>
            <person name="McLaren S."/>
            <person name="Milne S."/>
            <person name="Mistry S."/>
            <person name="Moore M.J.F."/>
            <person name="Nickerson T."/>
            <person name="O'Dell C.N."/>
            <person name="Oliver K."/>
            <person name="Palmeiri A."/>
            <person name="Palmer S.A."/>
            <person name="Parker A."/>
            <person name="Patel D."/>
            <person name="Pearce A.V."/>
            <person name="Peck A.I."/>
            <person name="Pelan S."/>
            <person name="Phelps K."/>
            <person name="Phillimore B.J."/>
            <person name="Plumb R."/>
            <person name="Rajan J."/>
            <person name="Raymond C."/>
            <person name="Rouse G."/>
            <person name="Saenphimmachak C."/>
            <person name="Sehra H.K."/>
            <person name="Sheridan E."/>
            <person name="Shownkeen R."/>
            <person name="Sims S."/>
            <person name="Skuce C.D."/>
            <person name="Smith M."/>
            <person name="Steward C."/>
            <person name="Subramanian S."/>
            <person name="Sycamore N."/>
            <person name="Tracey A."/>
            <person name="Tromans A."/>
            <person name="Van Helmond Z."/>
            <person name="Wall M."/>
            <person name="Wallis J.M."/>
            <person name="White S."/>
            <person name="Whitehead S.L."/>
            <person name="Wilkinson J.E."/>
            <person name="Willey D.L."/>
            <person name="Williams H."/>
            <person name="Wilming L."/>
            <person name="Wray P.W."/>
            <person name="Wu Z."/>
            <person name="Coulson A."/>
            <person name="Vaudin M."/>
            <person name="Sulston J.E."/>
            <person name="Durbin R.M."/>
            <person name="Hubbard T."/>
            <person name="Wooster R."/>
            <person name="Dunham I."/>
            <person name="Carter N.P."/>
            <person name="McVean G."/>
            <person name="Ross M.T."/>
            <person name="Harrow J."/>
            <person name="Olson M.V."/>
            <person name="Beck S."/>
            <person name="Rogers J."/>
            <person name="Bentley D.R."/>
        </authorList>
    </citation>
    <scope>NUCLEOTIDE SEQUENCE [LARGE SCALE GENOMIC DNA]</scope>
</reference>
<reference key="6">
    <citation type="submission" date="2005-07" db="EMBL/GenBank/DDBJ databases">
        <authorList>
            <person name="Mural R.J."/>
            <person name="Istrail S."/>
            <person name="Sutton G.G."/>
            <person name="Florea L."/>
            <person name="Halpern A.L."/>
            <person name="Mobarry C.M."/>
            <person name="Lippert R."/>
            <person name="Walenz B."/>
            <person name="Shatkay H."/>
            <person name="Dew I."/>
            <person name="Miller J.R."/>
            <person name="Flanigan M.J."/>
            <person name="Edwards N.J."/>
            <person name="Bolanos R."/>
            <person name="Fasulo D."/>
            <person name="Halldorsson B.V."/>
            <person name="Hannenhalli S."/>
            <person name="Turner R."/>
            <person name="Yooseph S."/>
            <person name="Lu F."/>
            <person name="Nusskern D.R."/>
            <person name="Shue B.C."/>
            <person name="Zheng X.H."/>
            <person name="Zhong F."/>
            <person name="Delcher A.L."/>
            <person name="Huson D.H."/>
            <person name="Kravitz S.A."/>
            <person name="Mouchard L."/>
            <person name="Reinert K."/>
            <person name="Remington K.A."/>
            <person name="Clark A.G."/>
            <person name="Waterman M.S."/>
            <person name="Eichler E.E."/>
            <person name="Adams M.D."/>
            <person name="Hunkapiller M.W."/>
            <person name="Myers E.W."/>
            <person name="Venter J.C."/>
        </authorList>
    </citation>
    <scope>NUCLEOTIDE SEQUENCE [LARGE SCALE GENOMIC DNA]</scope>
</reference>
<reference key="7">
    <citation type="journal article" date="2004" name="Genome Res.">
        <title>The status, quality, and expansion of the NIH full-length cDNA project: the Mammalian Gene Collection (MGC).</title>
        <authorList>
            <consortium name="The MGC Project Team"/>
        </authorList>
    </citation>
    <scope>NUCLEOTIDE SEQUENCE [LARGE SCALE MRNA]</scope>
    <source>
        <tissue>Spleen</tissue>
    </source>
</reference>
<reference key="8">
    <citation type="journal article" date="1979" name="Biochem. J.">
        <title>Complete amino acid sequences of the three collagen-like regions present in subcomponent C1q of the first component of human complement.</title>
        <authorList>
            <person name="Reid K.B.M."/>
        </authorList>
    </citation>
    <scope>PROTEIN SEQUENCE OF 23-130</scope>
    <scope>HYDROXYLATION AT LYS-33; PRO-39; PRO-45; LYS-48; PRO-54; PRO-57; LYS-67; PRO-73; PRO-79; PRO-85 AND LYS-100</scope>
    <scope>GLYCOSYLATION AT LYS-33; LYS-48; LYS-67 AND LYS-100</scope>
</reference>
<reference key="9">
    <citation type="journal article" date="1982" name="Biochem. J.">
        <title>Completion of the amino acid sequences of the A and B chains of subcomponent C1q of the first component of human complement.</title>
        <authorList>
            <person name="Reid K.B.M."/>
            <person name="Gagnon J."/>
            <person name="Frampton J."/>
        </authorList>
    </citation>
    <scope>PROTEIN SEQUENCE OF 131-245</scope>
</reference>
<reference key="10">
    <citation type="journal article" date="1978" name="Biochem. J.">
        <title>Amino acid sequence of the N-terminal 108 amino acid residues of the B chain of subcomponent C1q of the first component of human complement.</title>
        <authorList>
            <person name="Reid K.B.M."/>
            <person name="Thompson E.O.P."/>
        </authorList>
    </citation>
    <scope>DISULFIDE BOND</scope>
</reference>
<reference key="11">
    <citation type="journal article" date="1980" name="J. Biol. Chem.">
        <title>Activation of a complex of C1r and C1s subcomponents of human complement C1 by the third subcomponent C1q.</title>
        <authorList>
            <person name="Lin T.Y."/>
            <person name="Fletcher D.S."/>
        </authorList>
    </citation>
    <scope>FUNCTION</scope>
    <scope>SUBUNIT</scope>
</reference>
<reference key="12">
    <citation type="journal article" date="1980" name="Nature">
        <title>The Clq receptor site on immunoglobulin G.</title>
        <authorList>
            <person name="Burton D.R."/>
            <person name="Boyd J."/>
            <person name="Brampton A.D."/>
            <person name="Easterbrook-Smith S.B."/>
            <person name="Emanuel E.J."/>
            <person name="Novotny J."/>
            <person name="Rademacher T.W."/>
            <person name="van Schravendijk M.R."/>
            <person name="Sternberg M.J."/>
            <person name="Dwek R.A."/>
        </authorList>
    </citation>
    <scope>FUNCTION</scope>
</reference>
<reference key="13">
    <citation type="journal article" date="1983" name="J. Biol. Chem.">
        <title>The binding properties of human complement component C1q. Interaction with mucopolysaccharides.</title>
        <authorList>
            <person name="Almeda S."/>
            <person name="Rosenberg R.D."/>
            <person name="Bing D.H."/>
        </authorList>
    </citation>
    <scope>ACTIVITY REGULATION</scope>
</reference>
<reference key="14">
    <citation type="journal article" date="1988" name="Nature">
        <title>The binding site for C1q on IgG.</title>
        <authorList>
            <person name="Duncan A.R."/>
            <person name="Winter G."/>
        </authorList>
    </citation>
    <scope>FUNCTION</scope>
</reference>
<reference key="15">
    <citation type="journal article" date="1982" name="Proc. Natl. Acad. Sci. U.S.A.">
        <title>Ultrastructure of the first component of human complement: electron microscopy of the crosslinked complex.</title>
        <authorList>
            <person name="Strang C.J."/>
            <person name="Siegel R.C."/>
            <person name="Phillips M.L."/>
            <person name="Poon P.H."/>
            <person name="Schumaker V.N."/>
        </authorList>
    </citation>
    <scope>SUBUNIT</scope>
</reference>
<reference key="16">
    <citation type="journal article" date="1985" name="Biochem. J.">
        <title>Molecular modelling of human complement subcomponent C1q and its complex with C1r2C1s2 derived from neutron-scattering curves and hydrodynamic properties.</title>
        <authorList>
            <person name="Perkins S.J."/>
        </authorList>
    </citation>
    <scope>SUBUNIT</scope>
</reference>
<reference key="17">
    <citation type="journal article" date="1997" name="Immunity">
        <title>Complement receptor type 1 (CR1, CD35) is a receptor for C1q.</title>
        <authorList>
            <person name="Klickstein L.B."/>
            <person name="Barbashov S.F."/>
            <person name="Liu T."/>
            <person name="Jack R.M."/>
            <person name="Nicholson-Weller A."/>
        </authorList>
    </citation>
    <scope>INTERACTION WITH CR1</scope>
</reference>
<reference key="18">
    <citation type="journal article" date="2003" name="J. Immunol.">
        <title>Modular organization of the carboxyl-terminal, globular head region of human C1q A, B, and C chains.</title>
        <authorList>
            <person name="Kishore U."/>
            <person name="Gupta S.K."/>
            <person name="Perdikoulis M.V."/>
            <person name="Kojouharova M.S."/>
            <person name="Urban B.C."/>
            <person name="Reid K.B."/>
        </authorList>
    </citation>
    <scope>FUNCTION FOLLOWING ASSOCIATION WITH IMMUNOGLOBULIN MU</scope>
</reference>
<reference key="19">
    <citation type="journal article" date="2005" name="J. Proteome Res.">
        <title>Human plasma N-glycoproteome analysis by immunoaffinity subtraction, hydrazide chemistry, and mass spectrometry.</title>
        <authorList>
            <person name="Liu T."/>
            <person name="Qian W.-J."/>
            <person name="Gritsenko M.A."/>
            <person name="Camp D.G. II"/>
            <person name="Monroe M.E."/>
            <person name="Moore R.J."/>
            <person name="Smith R.D."/>
        </authorList>
    </citation>
    <scope>GLYCOSYLATION [LARGE SCALE ANALYSIS] AT ASN-146</scope>
    <source>
        <tissue>Plasma</tissue>
    </source>
</reference>
<reference key="20">
    <citation type="journal article" date="2008" name="Biochemistry">
        <title>Interaction of human C1q with IgG and IgM: revisited.</title>
        <authorList>
            <person name="Gadjeva M.G."/>
            <person name="Rouseva M.M."/>
            <person name="Zlatarova A.S."/>
            <person name="Reid K.B."/>
            <person name="Kishore U."/>
            <person name="Kojouharova M.S."/>
        </authorList>
    </citation>
    <scope>FUNCTION FOLLOWING ASSOCIATION WITH IMMUNOGLOBULIN MU</scope>
    <scope>MUTAGENESIS OF LYS-222</scope>
</reference>
<reference key="21">
    <citation type="journal article" date="2009" name="J. Proteome Res.">
        <title>Glycoproteomics analysis of human liver tissue by combination of multiple enzyme digestion and hydrazide chemistry.</title>
        <authorList>
            <person name="Chen R."/>
            <person name="Jiang X."/>
            <person name="Sun D."/>
            <person name="Han G."/>
            <person name="Wang F."/>
            <person name="Ye M."/>
            <person name="Wang L."/>
            <person name="Zou H."/>
        </authorList>
    </citation>
    <scope>GLYCOSYLATION [LARGE SCALE ANALYSIS] AT ASN-146</scope>
    <source>
        <tissue>Liver</tissue>
    </source>
</reference>
<reference key="22">
    <citation type="journal article" date="1998" name="Immunobiology">
        <title>Molecular basis of hereditary C1q deficiency.</title>
        <authorList>
            <person name="Petry F."/>
        </authorList>
    </citation>
    <scope>REVIEW ON C1Q DEFICIENCY</scope>
</reference>
<reference key="23">
    <citation type="journal article" date="2009" name="Proc. Natl. Acad. Sci. U.S.A.">
        <title>The human IgM pentamer is a mushroom-shaped molecule with a flexural bias.</title>
        <authorList>
            <person name="Czajkowsky D.M."/>
            <person name="Shao Z."/>
        </authorList>
    </citation>
    <scope>FUNCTION</scope>
</reference>
<reference key="24">
    <citation type="journal article" date="2013" name="J. Biol. Chem.">
        <title>Collagen-binding microbial surface components recognizing adhesive matrix molecule (MSCRAMM) of Gram-positive bacteria inhibit complement activation via the classical pathway.</title>
        <authorList>
            <person name="Kang M."/>
            <person name="Ko Y.P."/>
            <person name="Liang X."/>
            <person name="Ross C.L."/>
            <person name="Liu Q."/>
            <person name="Murray B.E."/>
            <person name="Hoeoek M."/>
        </authorList>
    </citation>
    <scope>INTERACTION WITH STAPHYLOCOCCUS AUREUS CNA (MICROBIAL INFECTION)</scope>
</reference>
<reference key="25">
    <citation type="journal article" date="2013" name="Proc. Natl. Acad. Sci. U.S.A.">
        <title>Expression of recombinant human complement C1q allows identification of the C1r/C1s-binding sites.</title>
        <authorList>
            <person name="Bally I."/>
            <person name="Ancelet S."/>
            <person name="Moriscot C."/>
            <person name="Gonnet F."/>
            <person name="Mantovani A."/>
            <person name="Daniel R."/>
            <person name="Schoehn G."/>
            <person name="Arlaud G.J."/>
            <person name="Thielens N.M."/>
        </authorList>
    </citation>
    <scope>SUBUNIT</scope>
    <scope>MUTAGENESIS OF LYS-81</scope>
</reference>
<reference key="26">
    <citation type="journal article" date="2014" name="Science">
        <title>Complement is activated by IgG hexamers assembled at the cell surface.</title>
        <authorList>
            <person name="Diebolder C.A."/>
            <person name="Beurskens F.J."/>
            <person name="de Jong R.N."/>
            <person name="Koning R.I."/>
            <person name="Strumane K."/>
            <person name="Lindorfer M.A."/>
            <person name="Voorhorst M."/>
            <person name="Ugurlar D."/>
            <person name="Rosati S."/>
            <person name="Heck A.J."/>
            <person name="van de Winkel J.G."/>
            <person name="Wilson I.A."/>
            <person name="Koster A.J."/>
            <person name="Taylor R.P."/>
            <person name="Saphire E.O."/>
            <person name="Burton D.R."/>
            <person name="Schuurman J."/>
            <person name="Gros P."/>
            <person name="Parren P.W."/>
        </authorList>
    </citation>
    <scope>FUNCTION</scope>
</reference>
<reference key="27">
    <citation type="journal article" date="2017" name="Sci. Rep.">
        <title>Evidence for C1q-mediated crosslinking of CD33/LAIR-1 inhibitory immunoreceptors and biological control of CD33/LAIR-1 expression.</title>
        <authorList>
            <person name="Son M."/>
            <person name="Diamond B."/>
            <person name="Volpe B.T."/>
            <person name="Aranow C.B."/>
            <person name="Mackay M.C."/>
            <person name="Santiago-Schwarz F."/>
        </authorList>
    </citation>
    <scope>INTERACTION WITH CD33</scope>
</reference>
<reference key="28">
    <citation type="journal article" date="2018" name="Front. Immunol.">
        <title>C1q and Mannose-Binding Lectin Interact with CR1 in the Same Region on CCP24-25 Modules.</title>
        <authorList>
            <person name="Jacquet M."/>
            <person name="Cioci G."/>
            <person name="Fouet G."/>
            <person name="Bally I."/>
            <person name="Thielens N.M."/>
            <person name="Gaboriaud C."/>
            <person name="Rossi V."/>
        </authorList>
    </citation>
    <scope>INTERACTION WITH CR1</scope>
</reference>
<reference key="29">
    <citation type="journal article" date="2021" name="Proc. Natl. Acad. Sci. U.S.A.">
        <title>C1q binding to surface-bound IgG is stabilized by C1r2s2 proteases.</title>
        <authorList>
            <person name="Zwarthoff S.A."/>
            <person name="Widmer K."/>
            <person name="Kuipers A."/>
            <person name="Strasser J."/>
            <person name="Ruyken M."/>
            <person name="Aerts P.C."/>
            <person name="de Haas C.J.C."/>
            <person name="Ugurlar D."/>
            <person name="den Boer M.A."/>
            <person name="Vidarsson G."/>
            <person name="van Strijp J.A.G."/>
            <person name="Gros P."/>
            <person name="Parren P.W.H.I."/>
            <person name="van Kessel K.P.M."/>
            <person name="Preiner J."/>
            <person name="Beurskens F.J."/>
            <person name="Schuurman J."/>
            <person name="Ricklin D."/>
            <person name="Rooijakkers S.H.M."/>
        </authorList>
    </citation>
    <scope>FUNCTION</scope>
    <scope>SUBUNIT</scope>
    <scope>SUBCELLULAR LOCATION</scope>
</reference>
<reference evidence="32" key="30">
    <citation type="journal article" date="2003" name="J. Biol. Chem.">
        <title>The crystal structure of the globular head of complement protein C1q provides a basis for its versatile recognition properties.</title>
        <authorList>
            <person name="Gaboriaud C."/>
            <person name="Juanhuix J."/>
            <person name="Gruez A."/>
            <person name="Lacroix M."/>
            <person name="Darnault C."/>
            <person name="Pignol D."/>
            <person name="Verger D."/>
            <person name="Fontecilla-Camps J.-C."/>
            <person name="Arlaud G.J."/>
        </authorList>
    </citation>
    <scope>X-RAY CRYSTALLOGRAPHY (1.85 ANGSTROMS) OF 112-244 IN COMPLEX WITH C1QB; C1QC AND CALCIUM</scope>
    <scope>SUBUNIT</scope>
</reference>
<reference evidence="33 34" key="31">
    <citation type="journal article" date="2008" name="J. Immunol.">
        <title>C1q binds phosphatidylserine and likely acts as a multiligand-bridging molecule in apoptotic cell recognition.</title>
        <authorList>
            <person name="Paidassi H."/>
            <person name="Tacnet-Delorme P."/>
            <person name="Garlatti V."/>
            <person name="Darnault C."/>
            <person name="Ghebrehiwet B."/>
            <person name="Gaboriaud C."/>
            <person name="Arlaud G.J."/>
            <person name="Frachet P."/>
        </authorList>
    </citation>
    <scope>X-RAY CRYSTALLOGRAPHY (1.90 ANGSTROMS) OF 112-245 IN COMPLEX WITH C1QB; C1QC AND CALCIUM</scope>
    <scope>FUNCTION</scope>
    <scope>SUBCELLULAR LOCATION</scope>
    <scope>SUBUNIT</scope>
</reference>
<reference evidence="35 36" key="32">
    <citation type="journal article" date="2010" name="J. Immunol.">
        <title>C1q binds deoxyribose and heparan sulfate through neighboring sites of its recognition domain.</title>
        <authorList>
            <person name="Garlatti V."/>
            <person name="Chouquet A."/>
            <person name="Lunardi T."/>
            <person name="Vives R."/>
            <person name="Paidassi H."/>
            <person name="Lortat-Jacob H."/>
            <person name="Thielens N.M."/>
            <person name="Arlaud G.J."/>
            <person name="Gaboriaud C."/>
        </authorList>
    </citation>
    <scope>X-RAY CRYSTALLOGRAPHY (1.25 ANGSTROMS) OF 112-245 IN COMPLEX WITH C1QB AND C1QC</scope>
    <scope>SUBUNIT</scope>
    <scope>ACTIVITY REGULATION</scope>
</reference>
<reference evidence="37" key="33">
    <citation type="journal article" date="2018" name="Science">
        <title>Structures of C1-IgG1 provide insights into how danger pattern recognition activates complement.</title>
        <authorList>
            <person name="Ugurlar D."/>
            <person name="Howes S.C."/>
            <person name="de Kreuk B.J."/>
            <person name="Koning R.I."/>
            <person name="de Jong R.N."/>
            <person name="Beurskens F.J."/>
            <person name="Schuurman J."/>
            <person name="Koster A.J."/>
            <person name="Sharp T.H."/>
            <person name="Parren P.W.H.I."/>
            <person name="Gros P."/>
        </authorList>
    </citation>
    <scope>STRUCTURE BY ELECTRON MICROSCOPY (10.00 ANGSTROMS) OF 112-244 IN COMPLEX WITH C1QB; C1QC AND IMMUNOGLOBULIN GAMMA-1 HEAVY CHAIN</scope>
    <scope>FUNCTION</scope>
    <scope>SUBCELLULAR LOCATION</scope>
    <scope>SUBUNIT</scope>
    <scope>DISULFIDE BOND</scope>
</reference>
<feature type="signal peptide" evidence="20">
    <location>
        <begin position="1"/>
        <end position="22"/>
    </location>
</feature>
<feature type="chain" id="PRO_0000003517" description="Complement C1q subcomponent subunit A">
    <location>
        <begin position="23"/>
        <end position="245"/>
    </location>
</feature>
<feature type="domain" description="Collagen-like">
    <location>
        <begin position="31"/>
        <end position="109"/>
    </location>
</feature>
<feature type="domain" description="C1q" evidence="1">
    <location>
        <begin position="110"/>
        <end position="245"/>
    </location>
</feature>
<feature type="region of interest" description="Disordered" evidence="2">
    <location>
        <begin position="27"/>
        <end position="114"/>
    </location>
</feature>
<feature type="compositionally biased region" description="Basic and acidic residues" evidence="2">
    <location>
        <begin position="27"/>
        <end position="38"/>
    </location>
</feature>
<feature type="binding site" evidence="4 6 32 33">
    <location>
        <position position="199"/>
    </location>
    <ligand>
        <name>Ca(2+)</name>
        <dbReference type="ChEBI" id="CHEBI:29108"/>
    </ligand>
</feature>
<feature type="modified residue" description="5-hydroxylysine" evidence="20">
    <location>
        <position position="33"/>
    </location>
</feature>
<feature type="modified residue" description="4-hydroxyproline" evidence="20">
    <location>
        <position position="39"/>
    </location>
</feature>
<feature type="modified residue" description="4-hydroxyproline" evidence="20">
    <location>
        <position position="45"/>
    </location>
</feature>
<feature type="modified residue" description="5-hydroxylysine" evidence="20">
    <location>
        <position position="48"/>
    </location>
</feature>
<feature type="modified residue" description="4-hydroxyproline" evidence="20">
    <location>
        <position position="54"/>
    </location>
</feature>
<feature type="modified residue" description="4-hydroxyproline" evidence="20">
    <location>
        <position position="57"/>
    </location>
</feature>
<feature type="modified residue" description="5-hydroxylysine" evidence="20">
    <location>
        <position position="67"/>
    </location>
</feature>
<feature type="modified residue" description="4-hydroxyproline" evidence="20">
    <location>
        <position position="73"/>
    </location>
</feature>
<feature type="modified residue" description="4-hydroxyproline" evidence="20">
    <location>
        <position position="79"/>
    </location>
</feature>
<feature type="modified residue" description="4-hydroxyproline" evidence="20">
    <location>
        <position position="85"/>
    </location>
</feature>
<feature type="modified residue" description="5-hydroxylysine" evidence="20">
    <location>
        <position position="100"/>
    </location>
</feature>
<feature type="glycosylation site" description="O-linked (Gal...) hydroxylysine" evidence="20">
    <location>
        <position position="33"/>
    </location>
</feature>
<feature type="glycosylation site" description="O-linked (Gal...) hydroxylysine" evidence="20">
    <location>
        <position position="48"/>
    </location>
</feature>
<feature type="glycosylation site" description="O-linked (Gal...) hydroxylysine" evidence="20">
    <location>
        <position position="67"/>
    </location>
</feature>
<feature type="glycosylation site" description="O-linked (Gal...) hydroxylysine" evidence="20">
    <location>
        <position position="100"/>
    </location>
</feature>
<feature type="glycosylation site" description="N-linked (GlcNAc...) asparagine" evidence="5 8">
    <location>
        <position position="146"/>
    </location>
</feature>
<feature type="disulfide bond" description="Interchain (with C-29 in B chain)" evidence="25">
    <location>
        <position position="26"/>
    </location>
</feature>
<feature type="disulfide bond" evidence="15 37">
    <location>
        <begin position="172"/>
        <end position="190"/>
    </location>
</feature>
<feature type="sequence variant" id="VAR_021090" description="In dbSNP:rs17887074." evidence="28">
    <original>E</original>
    <variation>K</variation>
    <location>
        <position position="23"/>
    </location>
</feature>
<feature type="mutagenesis site" description="In LysA59; impaired ability to associate with C1R and C1S." evidence="11">
    <original>K</original>
    <variation>A</variation>
    <location>
        <position position="81"/>
    </location>
</feature>
<feature type="mutagenesis site" description="Decreases binding to IgM and IgG." evidence="7">
    <original>K</original>
    <variation>E</variation>
    <location>
        <position position="222"/>
    </location>
</feature>
<feature type="sequence conflict" description="In Ref. 8; AA sequence." evidence="30" ref="8">
    <original>P</original>
    <variation>K</variation>
    <location>
        <position position="97"/>
    </location>
</feature>
<feature type="sequence conflict" description="In Ref. 8; AA sequence." evidence="30" ref="8">
    <original>K</original>
    <variation>P</variation>
    <location>
        <position position="103"/>
    </location>
</feature>
<feature type="sequence conflict" description="In Ref. 9; AA sequence." evidence="30" ref="9">
    <original>C</original>
    <variation>N</variation>
    <location>
        <position position="172"/>
    </location>
</feature>
<feature type="sequence conflict" description="In Ref. 9; AA sequence." evidence="30" ref="9">
    <original>S</original>
    <variation>W</variation>
    <location>
        <position position="178"/>
    </location>
</feature>
<feature type="sequence conflict" description="In Ref. 9; AA sequence." evidence="30" ref="9">
    <original>LIFP</original>
    <variation>ILPGF</variation>
    <location>
        <begin position="240"/>
        <end position="243"/>
    </location>
</feature>
<feature type="strand" evidence="39">
    <location>
        <begin position="116"/>
        <end position="120"/>
    </location>
</feature>
<feature type="strand" evidence="40">
    <location>
        <begin position="128"/>
        <end position="130"/>
    </location>
</feature>
<feature type="strand" evidence="39">
    <location>
        <begin position="135"/>
        <end position="140"/>
    </location>
</feature>
<feature type="turn" evidence="39">
    <location>
        <begin position="146"/>
        <end position="148"/>
    </location>
</feature>
<feature type="strand" evidence="38">
    <location>
        <begin position="150"/>
        <end position="152"/>
    </location>
</feature>
<feature type="strand" evidence="39">
    <location>
        <begin position="157"/>
        <end position="169"/>
    </location>
</feature>
<feature type="strand" evidence="39">
    <location>
        <begin position="171"/>
        <end position="179"/>
    </location>
</feature>
<feature type="strand" evidence="39">
    <location>
        <begin position="182"/>
        <end position="184"/>
    </location>
</feature>
<feature type="strand" evidence="39">
    <location>
        <begin position="188"/>
        <end position="191"/>
    </location>
</feature>
<feature type="strand" evidence="39">
    <location>
        <begin position="195"/>
        <end position="197"/>
    </location>
</feature>
<feature type="strand" evidence="39">
    <location>
        <begin position="199"/>
        <end position="209"/>
    </location>
</feature>
<feature type="strand" evidence="39">
    <location>
        <begin position="214"/>
        <end position="224"/>
    </location>
</feature>
<feature type="strand" evidence="39">
    <location>
        <begin position="229"/>
        <end position="232"/>
    </location>
</feature>
<feature type="strand" evidence="39">
    <location>
        <begin position="235"/>
        <end position="243"/>
    </location>
</feature>
<dbReference type="EMBL" id="AF135157">
    <property type="protein sequence ID" value="AAD32626.1"/>
    <property type="molecule type" value="mRNA"/>
</dbReference>
<dbReference type="EMBL" id="AY789471">
    <property type="protein sequence ID" value="AAV40828.1"/>
    <property type="molecule type" value="Genomic_DNA"/>
</dbReference>
<dbReference type="EMBL" id="AL158086">
    <property type="protein sequence ID" value="CAI22892.1"/>
    <property type="molecule type" value="Genomic_DNA"/>
</dbReference>
<dbReference type="EMBL" id="AK311980">
    <property type="protein sequence ID" value="BAG34919.1"/>
    <property type="molecule type" value="mRNA"/>
</dbReference>
<dbReference type="EMBL" id="AL158086">
    <property type="protein sequence ID" value="CAI22893.1"/>
    <property type="molecule type" value="Genomic_DNA"/>
</dbReference>
<dbReference type="EMBL" id="CH471134">
    <property type="protein sequence ID" value="EAW95014.1"/>
    <property type="molecule type" value="Genomic_DNA"/>
</dbReference>
<dbReference type="EMBL" id="BC030153">
    <property type="protein sequence ID" value="AAH30153.1"/>
    <property type="molecule type" value="mRNA"/>
</dbReference>
<dbReference type="EMBL" id="BC071986">
    <property type="protein sequence ID" value="AAH71986.1"/>
    <property type="molecule type" value="mRNA"/>
</dbReference>
<dbReference type="CCDS" id="CCDS226.1"/>
<dbReference type="PIR" id="S14350">
    <property type="entry name" value="C1HUQA"/>
</dbReference>
<dbReference type="RefSeq" id="NP_001334394.1">
    <property type="nucleotide sequence ID" value="NM_001347465.2"/>
</dbReference>
<dbReference type="RefSeq" id="NP_001334395.1">
    <property type="nucleotide sequence ID" value="NM_001347466.2"/>
</dbReference>
<dbReference type="RefSeq" id="NP_057075.1">
    <property type="nucleotide sequence ID" value="NM_015991.4"/>
</dbReference>
<dbReference type="PDB" id="1PK6">
    <property type="method" value="X-ray"/>
    <property type="resolution" value="1.85 A"/>
    <property type="chains" value="A=112-244"/>
</dbReference>
<dbReference type="PDB" id="2JG8">
    <property type="method" value="X-ray"/>
    <property type="resolution" value="2.05 A"/>
    <property type="chains" value="A/D=112-245"/>
</dbReference>
<dbReference type="PDB" id="2JG9">
    <property type="method" value="X-ray"/>
    <property type="resolution" value="1.90 A"/>
    <property type="chains" value="A/D=112-245"/>
</dbReference>
<dbReference type="PDB" id="2WNU">
    <property type="method" value="X-ray"/>
    <property type="resolution" value="2.30 A"/>
    <property type="chains" value="A/D=112-245"/>
</dbReference>
<dbReference type="PDB" id="2WNV">
    <property type="method" value="X-ray"/>
    <property type="resolution" value="1.25 A"/>
    <property type="chains" value="A/D=112-245"/>
</dbReference>
<dbReference type="PDB" id="5HKJ">
    <property type="method" value="X-ray"/>
    <property type="resolution" value="1.35 A"/>
    <property type="chains" value="A=110-245"/>
</dbReference>
<dbReference type="PDB" id="5HZF">
    <property type="method" value="X-ray"/>
    <property type="resolution" value="1.55 A"/>
    <property type="chains" value="A=110-245"/>
</dbReference>
<dbReference type="PDB" id="6FCZ">
    <property type="method" value="EM"/>
    <property type="resolution" value="10.00 A"/>
    <property type="chains" value="A=112-244"/>
</dbReference>
<dbReference type="PDB" id="6Z6V">
    <property type="method" value="X-ray"/>
    <property type="resolution" value="2.19 A"/>
    <property type="chains" value="A/D=110-245"/>
</dbReference>
<dbReference type="PDB" id="9C9L">
    <property type="method" value="EM"/>
    <property type="resolution" value="3.70 A"/>
    <property type="chains" value="B/I/J/K/L/M=28-40"/>
</dbReference>
<dbReference type="PDB" id="9C9U">
    <property type="method" value="EM"/>
    <property type="resolution" value="4.50 A"/>
    <property type="chains" value="B/I/J/K/L/M=23-60"/>
</dbReference>
<dbReference type="PDBsum" id="1PK6"/>
<dbReference type="PDBsum" id="2JG8"/>
<dbReference type="PDBsum" id="2JG9"/>
<dbReference type="PDBsum" id="2WNU"/>
<dbReference type="PDBsum" id="2WNV"/>
<dbReference type="PDBsum" id="5HKJ"/>
<dbReference type="PDBsum" id="5HZF"/>
<dbReference type="PDBsum" id="6FCZ"/>
<dbReference type="PDBsum" id="6Z6V"/>
<dbReference type="PDBsum" id="9C9L"/>
<dbReference type="PDBsum" id="9C9U"/>
<dbReference type="EMDB" id="EMD-4232"/>
<dbReference type="EMDB" id="EMD-45363"/>
<dbReference type="EMDB" id="EMD-45371"/>
<dbReference type="SASBDB" id="P02745"/>
<dbReference type="SMR" id="P02745"/>
<dbReference type="BioGRID" id="107173">
    <property type="interactions" value="212"/>
</dbReference>
<dbReference type="ComplexPortal" id="CPX-1919">
    <property type="entry name" value="Complement component C1q complex"/>
</dbReference>
<dbReference type="CORUM" id="P02745"/>
<dbReference type="FunCoup" id="P02745">
    <property type="interactions" value="103"/>
</dbReference>
<dbReference type="IntAct" id="P02745">
    <property type="interactions" value="58"/>
</dbReference>
<dbReference type="MINT" id="P02745"/>
<dbReference type="STRING" id="9606.ENSP00000363773"/>
<dbReference type="DrugBank" id="DB00112">
    <property type="generic name" value="Bevacizumab"/>
</dbReference>
<dbReference type="DrugBank" id="DB00002">
    <property type="generic name" value="Cetuximab"/>
</dbReference>
<dbReference type="DrugBank" id="DB00111">
    <property type="generic name" value="Daclizumab"/>
</dbReference>
<dbReference type="DrugBank" id="DB00005">
    <property type="generic name" value="Etanercept"/>
</dbReference>
<dbReference type="DrugBank" id="DB00110">
    <property type="generic name" value="Palivizumab"/>
</dbReference>
<dbReference type="GlyConnect" id="1142">
    <property type="glycosylation" value="7 N-Linked glycans (1 site)"/>
</dbReference>
<dbReference type="GlyCosmos" id="P02745">
    <property type="glycosylation" value="5 sites, 10 glycans"/>
</dbReference>
<dbReference type="GlyGen" id="P02745">
    <property type="glycosylation" value="5 sites, 47 N-linked glycans (1 site)"/>
</dbReference>
<dbReference type="iPTMnet" id="P02745"/>
<dbReference type="PhosphoSitePlus" id="P02745"/>
<dbReference type="BioMuta" id="C1QA"/>
<dbReference type="DMDM" id="399138"/>
<dbReference type="MassIVE" id="P02745"/>
<dbReference type="PaxDb" id="9606-ENSP00000363773"/>
<dbReference type="PeptideAtlas" id="P02745"/>
<dbReference type="ProteomicsDB" id="51561"/>
<dbReference type="Antibodypedia" id="707">
    <property type="antibodies" value="470 antibodies from 37 providers"/>
</dbReference>
<dbReference type="DNASU" id="712"/>
<dbReference type="Ensembl" id="ENST00000374642.8">
    <property type="protein sequence ID" value="ENSP00000363773.3"/>
    <property type="gene ID" value="ENSG00000173372.18"/>
</dbReference>
<dbReference type="Ensembl" id="ENST00000402322.2">
    <property type="protein sequence ID" value="ENSP00000385564.1"/>
    <property type="gene ID" value="ENSG00000173372.18"/>
</dbReference>
<dbReference type="Ensembl" id="ENST00000438241.2">
    <property type="protein sequence ID" value="ENSP00000416841.2"/>
    <property type="gene ID" value="ENSG00000173372.18"/>
</dbReference>
<dbReference type="Ensembl" id="ENST00000695740.1">
    <property type="protein sequence ID" value="ENSP00000512133.1"/>
    <property type="gene ID" value="ENSG00000173372.18"/>
</dbReference>
<dbReference type="Ensembl" id="ENST00000695744.1">
    <property type="protein sequence ID" value="ENSP00000512137.1"/>
    <property type="gene ID" value="ENSG00000173372.18"/>
</dbReference>
<dbReference type="GeneID" id="712"/>
<dbReference type="KEGG" id="hsa:712"/>
<dbReference type="MANE-Select" id="ENST00000374642.8">
    <property type="protein sequence ID" value="ENSP00000363773.3"/>
    <property type="RefSeq nucleotide sequence ID" value="NM_015991.4"/>
    <property type="RefSeq protein sequence ID" value="NP_057075.1"/>
</dbReference>
<dbReference type="UCSC" id="uc001bfy.4">
    <property type="organism name" value="human"/>
</dbReference>
<dbReference type="AGR" id="HGNC:1241"/>
<dbReference type="CTD" id="712"/>
<dbReference type="DisGeNET" id="712"/>
<dbReference type="GeneCards" id="C1QA"/>
<dbReference type="HGNC" id="HGNC:1241">
    <property type="gene designation" value="C1QA"/>
</dbReference>
<dbReference type="HPA" id="ENSG00000173372">
    <property type="expression patterns" value="Tissue enhanced (choroid plexus, lymphoid tissue)"/>
</dbReference>
<dbReference type="MalaCards" id="C1QA"/>
<dbReference type="MIM" id="120550">
    <property type="type" value="gene"/>
</dbReference>
<dbReference type="MIM" id="613652">
    <property type="type" value="phenotype"/>
</dbReference>
<dbReference type="neXtProt" id="NX_P02745"/>
<dbReference type="OpenTargets" id="ENSG00000173372"/>
<dbReference type="Orphanet" id="300345">
    <property type="disease" value="Autosomal systemic lupus erythematosus"/>
</dbReference>
<dbReference type="Orphanet" id="169147">
    <property type="disease" value="Immunodeficiency due to a classical component pathway complement deficiency"/>
</dbReference>
<dbReference type="PharmGKB" id="PA25622"/>
<dbReference type="VEuPathDB" id="HostDB:ENSG00000173372"/>
<dbReference type="eggNOG" id="ENOG502RZM2">
    <property type="taxonomic scope" value="Eukaryota"/>
</dbReference>
<dbReference type="GeneTree" id="ENSGT00940000162143"/>
<dbReference type="HOGENOM" id="CLU_001074_3_1_1"/>
<dbReference type="InParanoid" id="P02745"/>
<dbReference type="OMA" id="MEGPQGW"/>
<dbReference type="OrthoDB" id="6343173at2759"/>
<dbReference type="PAN-GO" id="P02745">
    <property type="GO annotations" value="0 GO annotations based on evolutionary models"/>
</dbReference>
<dbReference type="PhylomeDB" id="P02745"/>
<dbReference type="TreeFam" id="TF329591"/>
<dbReference type="PathwayCommons" id="P02745"/>
<dbReference type="Reactome" id="R-HSA-166663">
    <property type="pathway name" value="Initial triggering of complement"/>
</dbReference>
<dbReference type="Reactome" id="R-HSA-173623">
    <property type="pathway name" value="Classical antibody-mediated complement activation"/>
</dbReference>
<dbReference type="Reactome" id="R-HSA-977606">
    <property type="pathway name" value="Regulation of Complement cascade"/>
</dbReference>
<dbReference type="SignaLink" id="P02745"/>
<dbReference type="SIGNOR" id="P02745"/>
<dbReference type="BioGRID-ORCS" id="712">
    <property type="hits" value="10 hits in 1150 CRISPR screens"/>
</dbReference>
<dbReference type="ChiTaRS" id="C1QA">
    <property type="organism name" value="human"/>
</dbReference>
<dbReference type="EvolutionaryTrace" id="P02745"/>
<dbReference type="GeneWiki" id="C1QA"/>
<dbReference type="GenomeRNAi" id="712"/>
<dbReference type="Pharos" id="P02745">
    <property type="development level" value="Tbio"/>
</dbReference>
<dbReference type="PRO" id="PR:P02745"/>
<dbReference type="Proteomes" id="UP000005640">
    <property type="component" value="Chromosome 1"/>
</dbReference>
<dbReference type="RNAct" id="P02745">
    <property type="molecule type" value="protein"/>
</dbReference>
<dbReference type="Bgee" id="ENSG00000173372">
    <property type="expression patterns" value="Expressed in spleen and 184 other cell types or tissues"/>
</dbReference>
<dbReference type="ExpressionAtlas" id="P02745">
    <property type="expression patterns" value="baseline and differential"/>
</dbReference>
<dbReference type="GO" id="GO:0005581">
    <property type="term" value="C:collagen trimer"/>
    <property type="evidence" value="ECO:0007669"/>
    <property type="project" value="UniProtKB-KW"/>
</dbReference>
<dbReference type="GO" id="GO:0062023">
    <property type="term" value="C:collagen-containing extracellular matrix"/>
    <property type="evidence" value="ECO:0007005"/>
    <property type="project" value="BHF-UCL"/>
</dbReference>
<dbReference type="GO" id="GO:0005602">
    <property type="term" value="C:complement component C1 complex"/>
    <property type="evidence" value="ECO:0000304"/>
    <property type="project" value="ProtInc"/>
</dbReference>
<dbReference type="GO" id="GO:0062167">
    <property type="term" value="C:complement component C1q complex"/>
    <property type="evidence" value="ECO:0000353"/>
    <property type="project" value="ComplexPortal"/>
</dbReference>
<dbReference type="GO" id="GO:0005576">
    <property type="term" value="C:extracellular region"/>
    <property type="evidence" value="ECO:0000314"/>
    <property type="project" value="ComplexPortal"/>
</dbReference>
<dbReference type="GO" id="GO:0098890">
    <property type="term" value="C:extrinsic component of postsynaptic membrane"/>
    <property type="evidence" value="ECO:0007669"/>
    <property type="project" value="Ensembl"/>
</dbReference>
<dbReference type="GO" id="GO:0098888">
    <property type="term" value="C:extrinsic component of presynaptic membrane"/>
    <property type="evidence" value="ECO:0007669"/>
    <property type="project" value="Ensembl"/>
</dbReference>
<dbReference type="GO" id="GO:0098978">
    <property type="term" value="C:glutamatergic synapse"/>
    <property type="evidence" value="ECO:0007669"/>
    <property type="project" value="Ensembl"/>
</dbReference>
<dbReference type="GO" id="GO:0098794">
    <property type="term" value="C:postsynapse"/>
    <property type="evidence" value="ECO:0000250"/>
    <property type="project" value="ARUK-UCL"/>
</dbReference>
<dbReference type="GO" id="GO:0045202">
    <property type="term" value="C:synapse"/>
    <property type="evidence" value="ECO:0000250"/>
    <property type="project" value="ARUK-UCL"/>
</dbReference>
<dbReference type="GO" id="GO:0001540">
    <property type="term" value="F:amyloid-beta binding"/>
    <property type="evidence" value="ECO:0000304"/>
    <property type="project" value="ARUK-UCL"/>
</dbReference>
<dbReference type="GO" id="GO:0048143">
    <property type="term" value="P:astrocyte activation"/>
    <property type="evidence" value="ECO:0000250"/>
    <property type="project" value="ARUK-UCL"/>
</dbReference>
<dbReference type="GO" id="GO:0007267">
    <property type="term" value="P:cell-cell signaling"/>
    <property type="evidence" value="ECO:0000304"/>
    <property type="project" value="ProtInc"/>
</dbReference>
<dbReference type="GO" id="GO:0006956">
    <property type="term" value="P:complement activation"/>
    <property type="evidence" value="ECO:0000304"/>
    <property type="project" value="ProtInc"/>
</dbReference>
<dbReference type="GO" id="GO:0006958">
    <property type="term" value="P:complement activation, classical pathway"/>
    <property type="evidence" value="ECO:0000314"/>
    <property type="project" value="ComplexPortal"/>
</dbReference>
<dbReference type="GO" id="GO:0150062">
    <property type="term" value="P:complement-mediated synapse pruning"/>
    <property type="evidence" value="ECO:0000250"/>
    <property type="project" value="ARUK-UCL"/>
</dbReference>
<dbReference type="GO" id="GO:0045087">
    <property type="term" value="P:innate immune response"/>
    <property type="evidence" value="ECO:0007669"/>
    <property type="project" value="UniProtKB-KW"/>
</dbReference>
<dbReference type="GO" id="GO:0001774">
    <property type="term" value="P:microglial cell activation"/>
    <property type="evidence" value="ECO:0000250"/>
    <property type="project" value="ARUK-UCL"/>
</dbReference>
<dbReference type="GO" id="GO:0016322">
    <property type="term" value="P:neuron remodeling"/>
    <property type="evidence" value="ECO:0000250"/>
    <property type="project" value="ARUK-UCL"/>
</dbReference>
<dbReference type="GO" id="GO:0050808">
    <property type="term" value="P:synapse organization"/>
    <property type="evidence" value="ECO:0000250"/>
    <property type="project" value="ARUK-UCL"/>
</dbReference>
<dbReference type="GO" id="GO:0098883">
    <property type="term" value="P:synapse pruning"/>
    <property type="evidence" value="ECO:0000250"/>
    <property type="project" value="ARUK-UCL"/>
</dbReference>
<dbReference type="GO" id="GO:0150064">
    <property type="term" value="P:vertebrate eye-specific patterning"/>
    <property type="evidence" value="ECO:0000250"/>
    <property type="project" value="ARUK-UCL"/>
</dbReference>
<dbReference type="FunFam" id="2.60.120.40:FF:000001">
    <property type="entry name" value="Complement C1q B chain"/>
    <property type="match status" value="1"/>
</dbReference>
<dbReference type="Gene3D" id="2.60.120.40">
    <property type="match status" value="1"/>
</dbReference>
<dbReference type="InterPro" id="IPR001073">
    <property type="entry name" value="C1q_dom"/>
</dbReference>
<dbReference type="InterPro" id="IPR008160">
    <property type="entry name" value="Collagen"/>
</dbReference>
<dbReference type="InterPro" id="IPR050392">
    <property type="entry name" value="Collagen/C1q_domain"/>
</dbReference>
<dbReference type="InterPro" id="IPR008983">
    <property type="entry name" value="Tumour_necrosis_fac-like_dom"/>
</dbReference>
<dbReference type="PANTHER" id="PTHR15427:SF26">
    <property type="entry name" value="COMPLEMENT C1Q SUBCOMPONENT SUBUNIT A"/>
    <property type="match status" value="1"/>
</dbReference>
<dbReference type="PANTHER" id="PTHR15427">
    <property type="entry name" value="EMILIN ELASTIN MICROFIBRIL INTERFACE-LOCATED PROTEIN ELASTIN MICROFIBRIL INTERFACER"/>
    <property type="match status" value="1"/>
</dbReference>
<dbReference type="Pfam" id="PF00386">
    <property type="entry name" value="C1q"/>
    <property type="match status" value="1"/>
</dbReference>
<dbReference type="Pfam" id="PF01391">
    <property type="entry name" value="Collagen"/>
    <property type="match status" value="1"/>
</dbReference>
<dbReference type="PRINTS" id="PR00007">
    <property type="entry name" value="COMPLEMNTC1Q"/>
</dbReference>
<dbReference type="SMART" id="SM00110">
    <property type="entry name" value="C1Q"/>
    <property type="match status" value="1"/>
</dbReference>
<dbReference type="SUPFAM" id="SSF49842">
    <property type="entry name" value="TNF-like"/>
    <property type="match status" value="1"/>
</dbReference>
<dbReference type="PROSITE" id="PS50871">
    <property type="entry name" value="C1Q"/>
    <property type="match status" value="1"/>
</dbReference>
<organism>
    <name type="scientific">Homo sapiens</name>
    <name type="common">Human</name>
    <dbReference type="NCBI Taxonomy" id="9606"/>
    <lineage>
        <taxon>Eukaryota</taxon>
        <taxon>Metazoa</taxon>
        <taxon>Chordata</taxon>
        <taxon>Craniata</taxon>
        <taxon>Vertebrata</taxon>
        <taxon>Euteleostomi</taxon>
        <taxon>Mammalia</taxon>
        <taxon>Eutheria</taxon>
        <taxon>Euarchontoglires</taxon>
        <taxon>Primates</taxon>
        <taxon>Haplorrhini</taxon>
        <taxon>Catarrhini</taxon>
        <taxon>Hominidae</taxon>
        <taxon>Homo</taxon>
    </lineage>
</organism>
<gene>
    <name evidence="29 31" type="primary">C1QA</name>
</gene>
<evidence type="ECO:0000255" key="1">
    <source>
        <dbReference type="PROSITE-ProRule" id="PRU00368"/>
    </source>
</evidence>
<evidence type="ECO:0000256" key="2">
    <source>
        <dbReference type="SAM" id="MobiDB-lite"/>
    </source>
</evidence>
<evidence type="ECO:0000269" key="3">
    <source>
    </source>
</evidence>
<evidence type="ECO:0000269" key="4">
    <source>
    </source>
</evidence>
<evidence type="ECO:0000269" key="5">
    <source>
    </source>
</evidence>
<evidence type="ECO:0000269" key="6">
    <source>
    </source>
</evidence>
<evidence type="ECO:0000269" key="7">
    <source>
    </source>
</evidence>
<evidence type="ECO:0000269" key="8">
    <source>
    </source>
</evidence>
<evidence type="ECO:0000269" key="9">
    <source>
    </source>
</evidence>
<evidence type="ECO:0000269" key="10">
    <source>
    </source>
</evidence>
<evidence type="ECO:0000269" key="11">
    <source>
    </source>
</evidence>
<evidence type="ECO:0000269" key="12">
    <source>
    </source>
</evidence>
<evidence type="ECO:0000269" key="13">
    <source>
    </source>
</evidence>
<evidence type="ECO:0000269" key="14">
    <source>
    </source>
</evidence>
<evidence type="ECO:0000269" key="15">
    <source>
    </source>
</evidence>
<evidence type="ECO:0000269" key="16">
    <source>
    </source>
</evidence>
<evidence type="ECO:0000269" key="17">
    <source>
    </source>
</evidence>
<evidence type="ECO:0000269" key="18">
    <source>
    </source>
</evidence>
<evidence type="ECO:0000269" key="19">
    <source>
    </source>
</evidence>
<evidence type="ECO:0000269" key="20">
    <source>
    </source>
</evidence>
<evidence type="ECO:0000269" key="21">
    <source>
    </source>
</evidence>
<evidence type="ECO:0000269" key="22">
    <source>
    </source>
</evidence>
<evidence type="ECO:0000269" key="23">
    <source>
    </source>
</evidence>
<evidence type="ECO:0000269" key="24">
    <source>
    </source>
</evidence>
<evidence type="ECO:0000269" key="25">
    <source>
    </source>
</evidence>
<evidence type="ECO:0000269" key="26">
    <source>
    </source>
</evidence>
<evidence type="ECO:0000269" key="27">
    <source>
    </source>
</evidence>
<evidence type="ECO:0000269" key="28">
    <source ref="3"/>
</evidence>
<evidence type="ECO:0000303" key="29">
    <source>
    </source>
</evidence>
<evidence type="ECO:0000305" key="30"/>
<evidence type="ECO:0000312" key="31">
    <source>
        <dbReference type="HGNC" id="HGNC:1241"/>
    </source>
</evidence>
<evidence type="ECO:0007744" key="32">
    <source>
        <dbReference type="PDB" id="1PK6"/>
    </source>
</evidence>
<evidence type="ECO:0007744" key="33">
    <source>
        <dbReference type="PDB" id="2JG8"/>
    </source>
</evidence>
<evidence type="ECO:0007744" key="34">
    <source>
        <dbReference type="PDB" id="2JG9"/>
    </source>
</evidence>
<evidence type="ECO:0007744" key="35">
    <source>
        <dbReference type="PDB" id="2WNU"/>
    </source>
</evidence>
<evidence type="ECO:0007744" key="36">
    <source>
        <dbReference type="PDB" id="2WNV"/>
    </source>
</evidence>
<evidence type="ECO:0007744" key="37">
    <source>
        <dbReference type="PDB" id="6FCZ"/>
    </source>
</evidence>
<evidence type="ECO:0007829" key="38">
    <source>
        <dbReference type="PDB" id="2JG9"/>
    </source>
</evidence>
<evidence type="ECO:0007829" key="39">
    <source>
        <dbReference type="PDB" id="2WNV"/>
    </source>
</evidence>
<evidence type="ECO:0007829" key="40">
    <source>
        <dbReference type="PDB" id="5HKJ"/>
    </source>
</evidence>
<proteinExistence type="evidence at protein level"/>
<comment type="function">
    <text evidence="3 6 7 9 13 15 18 19 22 23">Core component of the complement C1 complex, a multiprotein complex that initiates the classical pathway of the complement system, a cascade of proteins that leads to phagocytosis and breakdown of pathogens and signaling that strengthens the adaptive immune system (PubMed:12847249, PubMed:19006321, PubMed:24626930, PubMed:29449492, PubMed:3258649, PubMed:34155115, PubMed:6249812, PubMed:6776418). The classical complement pathway is initiated by the C1Q subcomplex of the C1 complex, which specifically binds IgG or IgM immunoglobulins complexed with antigens, forming antigen-antibody complexes on the surface of pathogens: C1QA, together with C1QB and C1QC, specifically recognizes and binds the Fc regions of IgG or IgM via its C1q domain (PubMed:12847249, PubMed:19006321, PubMed:24626930, PubMed:29449492, PubMed:3258649, PubMed:6776418). Immunoglobulin-binding activates the proenzyme C1R, which cleaves C1S, initiating the proteolytic cascade of the complement system (PubMed:29449492). The C1Q subcomplex is activated by a hexamer of IgG complexed with antigens, while it is activated by a pentameric IgM (PubMed:19706439, PubMed:24626930, PubMed:29449492). The C1Q subcomplex also recognizes and binds phosphatidylserine exposed on the surface of cells undergoing programmed cell death, possibly promoting activation of the complement system (PubMed:18250442).</text>
</comment>
<comment type="activity regulation">
    <text evidence="10 21">The C1Q subcomplex is inhibited by sulfated molecules, such as triterpenoid sulfates, heparan sulfate, or chondroitin sulfates.</text>
</comment>
<comment type="subunit">
    <text evidence="4 6 10 11 14 15 16 17 19 22 24 26">Core component of the complement C1 complex, a calcium-dependent complex composed of 1 molecule of the C1Q subcomplex, 2 molecules of C1R and 2 molecules of C1S (PubMed:23650384, PubMed:29449492, PubMed:34155115, PubMed:6249812). The C1Q subcomplex is composed 18 subunits: 3 chains of C1QA, C1QB, and C1QC trimerize to form 6 collagen-like triple helices connected to six globular ligand-recognition modules (C1q domain) (PubMed:12960167, PubMed:18250442, PubMed:20548024, PubMed:29449492, PubMed:2988513, PubMed:6952210). Interacts with CR1 (via Sushi 24 and Sushi 25 domains) (PubMed:29563915, PubMed:9324355). Interacts (via C-terminus) with CD33; this interaction activates CD33 inhibitory motifs (PubMed:28325905).</text>
</comment>
<comment type="subunit">
    <text evidence="12">(Microbial infection) Interacts with Staphylococcus aureus protein Cna; this interaction results in the inhibition of the classical complement pathway.</text>
</comment>
<comment type="interaction">
    <interactant intactId="EBI-1220209">
        <id>P02745</id>
    </interactant>
    <interactant intactId="EBI-2813376">
        <id>P02746</id>
        <label>C1QB</label>
    </interactant>
    <organismsDiffer>false</organismsDiffer>
    <experiments>5</experiments>
</comment>
<comment type="interaction">
    <interactant intactId="EBI-1220209">
        <id>P02745</id>
    </interactant>
    <interactant intactId="EBI-14032968">
        <id>PRO_0000018590</id>
        <label>C1QBP</label>
        <dbReference type="UniProtKB" id="Q07021"/>
    </interactant>
    <organismsDiffer>false</organismsDiffer>
    <experiments>6</experiments>
</comment>
<comment type="interaction">
    <interactant intactId="EBI-1220209">
        <id>P02745</id>
    </interactant>
    <interactant intactId="EBI-744081">
        <id>Q96EQ0</id>
        <label>SGTB</label>
    </interactant>
    <organismsDiffer>false</organismsDiffer>
    <experiments>3</experiments>
</comment>
<comment type="interaction">
    <interactant intactId="EBI-1220209">
        <id>P02745</id>
    </interactant>
    <interactant intactId="EBI-947187">
        <id>Q9UHD9</id>
        <label>UBQLN2</label>
    </interactant>
    <organismsDiffer>false</organismsDiffer>
    <experiments>6</experiments>
</comment>
<comment type="subcellular location">
    <subcellularLocation>
        <location evidence="6 15">Secreted</location>
    </subcellularLocation>
    <subcellularLocation>
        <location evidence="19">Cell surface</location>
    </subcellularLocation>
    <text evidence="19">Specifically binds IgG or IgM immunoglobulins complexed with antigens, forming antigen-antibody complexes on the surface of pathogens.</text>
</comment>
<comment type="domain">
    <text evidence="15">The C1q domain is the ligand-recognition domain, which specifically recognizes and binds the Fc regions of IgG or IgM immunoglobulins.</text>
</comment>
<comment type="domain">
    <text evidence="15">The collagen-like domain interacts with C1R and C1S proenzymes.</text>
</comment>
<comment type="PTM">
    <text evidence="20">O-linked glycans are assumed to be the Glc-Gal disaccharides typically found as secondary modifications of hydroxylated lysines in collagen-like domains.</text>
</comment>
<comment type="disease" evidence="27">
    <disease id="DI-01305">
        <name>C1q deficiency 1</name>
        <acronym>C1QD1</acronym>
        <description>An autosomal recessive disorder caused by impaired activation of the complement classical pathway. It generally leads to severe immune complex disease characterized by recurrent skin lesions, chronic infections, an increased risk of systemic lupus erythematosus, and glomerulonephritis.</description>
        <dbReference type="MIM" id="613652"/>
    </disease>
    <text>The disease is caused by variants affecting the gene represented in this entry.</text>
</comment>
<comment type="online information" name="C1QAbase">
    <link uri="https://databases.lovd.nl/shared/genes/C1QA"/>
    <text>C1QA mutation db</text>
</comment>